<evidence type="ECO:0000255" key="1">
    <source>
        <dbReference type="HAMAP-Rule" id="MF_00300"/>
    </source>
</evidence>
<protein>
    <recommendedName>
        <fullName evidence="1">Chorismate synthase</fullName>
        <shortName evidence="1">CS</shortName>
        <ecNumber evidence="1">4.2.3.5</ecNumber>
    </recommendedName>
    <alternativeName>
        <fullName evidence="1">5-enolpyruvylshikimate-3-phosphate phospholyase</fullName>
    </alternativeName>
</protein>
<gene>
    <name evidence="1" type="primary">aroC</name>
    <name type="ordered locus">BMEA_A0461</name>
</gene>
<dbReference type="EC" id="4.2.3.5" evidence="1"/>
<dbReference type="EMBL" id="CP001488">
    <property type="protein sequence ID" value="ACO00243.1"/>
    <property type="molecule type" value="Genomic_DNA"/>
</dbReference>
<dbReference type="RefSeq" id="WP_004686582.1">
    <property type="nucleotide sequence ID" value="NC_012441.1"/>
</dbReference>
<dbReference type="SMR" id="C0RHD5"/>
<dbReference type="KEGG" id="bmi:BMEA_A0461"/>
<dbReference type="HOGENOM" id="CLU_034547_0_0_5"/>
<dbReference type="UniPathway" id="UPA00053">
    <property type="reaction ID" value="UER00090"/>
</dbReference>
<dbReference type="PRO" id="PR:C0RHD5"/>
<dbReference type="Proteomes" id="UP000001748">
    <property type="component" value="Chromosome I"/>
</dbReference>
<dbReference type="GO" id="GO:0005829">
    <property type="term" value="C:cytosol"/>
    <property type="evidence" value="ECO:0007669"/>
    <property type="project" value="TreeGrafter"/>
</dbReference>
<dbReference type="GO" id="GO:0004107">
    <property type="term" value="F:chorismate synthase activity"/>
    <property type="evidence" value="ECO:0007669"/>
    <property type="project" value="UniProtKB-UniRule"/>
</dbReference>
<dbReference type="GO" id="GO:0010181">
    <property type="term" value="F:FMN binding"/>
    <property type="evidence" value="ECO:0007669"/>
    <property type="project" value="TreeGrafter"/>
</dbReference>
<dbReference type="GO" id="GO:0008652">
    <property type="term" value="P:amino acid biosynthetic process"/>
    <property type="evidence" value="ECO:0007669"/>
    <property type="project" value="UniProtKB-KW"/>
</dbReference>
<dbReference type="GO" id="GO:0009073">
    <property type="term" value="P:aromatic amino acid family biosynthetic process"/>
    <property type="evidence" value="ECO:0007669"/>
    <property type="project" value="UniProtKB-KW"/>
</dbReference>
<dbReference type="GO" id="GO:0009423">
    <property type="term" value="P:chorismate biosynthetic process"/>
    <property type="evidence" value="ECO:0007669"/>
    <property type="project" value="UniProtKB-UniRule"/>
</dbReference>
<dbReference type="CDD" id="cd07304">
    <property type="entry name" value="Chorismate_synthase"/>
    <property type="match status" value="1"/>
</dbReference>
<dbReference type="Gene3D" id="3.60.150.10">
    <property type="entry name" value="Chorismate synthase AroC"/>
    <property type="match status" value="1"/>
</dbReference>
<dbReference type="HAMAP" id="MF_00300">
    <property type="entry name" value="Chorismate_synth"/>
    <property type="match status" value="1"/>
</dbReference>
<dbReference type="InterPro" id="IPR000453">
    <property type="entry name" value="Chorismate_synth"/>
</dbReference>
<dbReference type="InterPro" id="IPR035904">
    <property type="entry name" value="Chorismate_synth_AroC_sf"/>
</dbReference>
<dbReference type="InterPro" id="IPR020541">
    <property type="entry name" value="Chorismate_synthase_CS"/>
</dbReference>
<dbReference type="NCBIfam" id="TIGR00033">
    <property type="entry name" value="aroC"/>
    <property type="match status" value="1"/>
</dbReference>
<dbReference type="NCBIfam" id="NF003793">
    <property type="entry name" value="PRK05382.1"/>
    <property type="match status" value="1"/>
</dbReference>
<dbReference type="PANTHER" id="PTHR21085">
    <property type="entry name" value="CHORISMATE SYNTHASE"/>
    <property type="match status" value="1"/>
</dbReference>
<dbReference type="PANTHER" id="PTHR21085:SF0">
    <property type="entry name" value="CHORISMATE SYNTHASE"/>
    <property type="match status" value="1"/>
</dbReference>
<dbReference type="Pfam" id="PF01264">
    <property type="entry name" value="Chorismate_synt"/>
    <property type="match status" value="1"/>
</dbReference>
<dbReference type="PIRSF" id="PIRSF001456">
    <property type="entry name" value="Chorismate_synth"/>
    <property type="match status" value="1"/>
</dbReference>
<dbReference type="SUPFAM" id="SSF103263">
    <property type="entry name" value="Chorismate synthase, AroC"/>
    <property type="match status" value="1"/>
</dbReference>
<dbReference type="PROSITE" id="PS00787">
    <property type="entry name" value="CHORISMATE_SYNTHASE_1"/>
    <property type="match status" value="1"/>
</dbReference>
<dbReference type="PROSITE" id="PS00788">
    <property type="entry name" value="CHORISMATE_SYNTHASE_2"/>
    <property type="match status" value="1"/>
</dbReference>
<dbReference type="PROSITE" id="PS00789">
    <property type="entry name" value="CHORISMATE_SYNTHASE_3"/>
    <property type="match status" value="1"/>
</dbReference>
<proteinExistence type="inferred from homology"/>
<accession>C0RHD5</accession>
<organism>
    <name type="scientific">Brucella melitensis biotype 2 (strain ATCC 23457)</name>
    <dbReference type="NCBI Taxonomy" id="546272"/>
    <lineage>
        <taxon>Bacteria</taxon>
        <taxon>Pseudomonadati</taxon>
        <taxon>Pseudomonadota</taxon>
        <taxon>Alphaproteobacteria</taxon>
        <taxon>Hyphomicrobiales</taxon>
        <taxon>Brucellaceae</taxon>
        <taxon>Brucella/Ochrobactrum group</taxon>
        <taxon>Brucella</taxon>
    </lineage>
</organism>
<keyword id="KW-0028">Amino-acid biosynthesis</keyword>
<keyword id="KW-0057">Aromatic amino acid biosynthesis</keyword>
<keyword id="KW-0274">FAD</keyword>
<keyword id="KW-0285">Flavoprotein</keyword>
<keyword id="KW-0288">FMN</keyword>
<keyword id="KW-0456">Lyase</keyword>
<keyword id="KW-0521">NADP</keyword>
<sequence length="364" mass="38987">MSHNSFGHLFRVTTWGESHGLALGCVVDGCPPGITFTEAEIQSFLDKRKPGQSKYTTQRREPDQVRVLSGVLLGEDGVTMTTTGTPISMMIENTDQRSKDYGEIARQYRPGHADYAYDVKYGIRDYRGGGRSSARETAARVAAGAIARKVVPGLEVRGALVSIGAHDIDRSRWNWAEVDNNPFFTPDAGSVEVFADYLDGIRKNGSSVGAIIEIVAEGVPAGIGAPIYGKLDQDIASYLMSINAVKGVEIGNGFEAARLTGEENADEMRMGNDGKPIFLSNHAGGVLGGIATGAPVVARFAVKPTSSILTPRRSINKDGNEVDVMTRGRHDPCVGIRAVPIGEAMVACAIADHYLRHRGQTGRV</sequence>
<comment type="function">
    <text evidence="1">Catalyzes the anti-1,4-elimination of the C-3 phosphate and the C-6 proR hydrogen from 5-enolpyruvylshikimate-3-phosphate (EPSP) to yield chorismate, which is the branch point compound that serves as the starting substrate for the three terminal pathways of aromatic amino acid biosynthesis. This reaction introduces a second double bond into the aromatic ring system.</text>
</comment>
<comment type="catalytic activity">
    <reaction evidence="1">
        <text>5-O-(1-carboxyvinyl)-3-phosphoshikimate = chorismate + phosphate</text>
        <dbReference type="Rhea" id="RHEA:21020"/>
        <dbReference type="ChEBI" id="CHEBI:29748"/>
        <dbReference type="ChEBI" id="CHEBI:43474"/>
        <dbReference type="ChEBI" id="CHEBI:57701"/>
        <dbReference type="EC" id="4.2.3.5"/>
    </reaction>
</comment>
<comment type="cofactor">
    <cofactor evidence="1">
        <name>FMNH2</name>
        <dbReference type="ChEBI" id="CHEBI:57618"/>
    </cofactor>
    <text evidence="1">Reduced FMN (FMNH(2)).</text>
</comment>
<comment type="pathway">
    <text evidence="1">Metabolic intermediate biosynthesis; chorismate biosynthesis; chorismate from D-erythrose 4-phosphate and phosphoenolpyruvate: step 7/7.</text>
</comment>
<comment type="subunit">
    <text evidence="1">Homotetramer.</text>
</comment>
<comment type="similarity">
    <text evidence="1">Belongs to the chorismate synthase family.</text>
</comment>
<reference key="1">
    <citation type="submission" date="2009-03" db="EMBL/GenBank/DDBJ databases">
        <title>Brucella melitensis ATCC 23457 whole genome shotgun sequencing project.</title>
        <authorList>
            <person name="Setubal J.C."/>
            <person name="Boyle S."/>
            <person name="Crasta O.R."/>
            <person name="Gillespie J.J."/>
            <person name="Kenyon R.W."/>
            <person name="Lu J."/>
            <person name="Mane S."/>
            <person name="Nagrani S."/>
            <person name="Shallom J.M."/>
            <person name="Shallom S."/>
            <person name="Shukla M."/>
            <person name="Snyder E.E."/>
            <person name="Sobral B.W."/>
            <person name="Wattam A.R."/>
            <person name="Will R."/>
            <person name="Williams K."/>
            <person name="Yoo H."/>
            <person name="Munk C."/>
            <person name="Tapia R."/>
            <person name="Han C."/>
            <person name="Detter J.C."/>
            <person name="Bruce D."/>
            <person name="Brettin T.S."/>
        </authorList>
    </citation>
    <scope>NUCLEOTIDE SEQUENCE [LARGE SCALE GENOMIC DNA]</scope>
    <source>
        <strain>ATCC 23457</strain>
    </source>
</reference>
<feature type="chain" id="PRO_1000132757" description="Chorismate synthase">
    <location>
        <begin position="1"/>
        <end position="364"/>
    </location>
</feature>
<feature type="binding site" evidence="1">
    <location>
        <position position="48"/>
    </location>
    <ligand>
        <name>NADP(+)</name>
        <dbReference type="ChEBI" id="CHEBI:58349"/>
    </ligand>
</feature>
<feature type="binding site" evidence="1">
    <location>
        <begin position="131"/>
        <end position="133"/>
    </location>
    <ligand>
        <name>FMN</name>
        <dbReference type="ChEBI" id="CHEBI:58210"/>
    </ligand>
</feature>
<feature type="binding site" evidence="1">
    <location>
        <begin position="243"/>
        <end position="244"/>
    </location>
    <ligand>
        <name>FMN</name>
        <dbReference type="ChEBI" id="CHEBI:58210"/>
    </ligand>
</feature>
<feature type="binding site" evidence="1">
    <location>
        <position position="288"/>
    </location>
    <ligand>
        <name>FMN</name>
        <dbReference type="ChEBI" id="CHEBI:58210"/>
    </ligand>
</feature>
<feature type="binding site" evidence="1">
    <location>
        <begin position="303"/>
        <end position="307"/>
    </location>
    <ligand>
        <name>FMN</name>
        <dbReference type="ChEBI" id="CHEBI:58210"/>
    </ligand>
</feature>
<feature type="binding site" evidence="1">
    <location>
        <position position="329"/>
    </location>
    <ligand>
        <name>FMN</name>
        <dbReference type="ChEBI" id="CHEBI:58210"/>
    </ligand>
</feature>
<name>AROC_BRUMB</name>